<protein>
    <recommendedName>
        <fullName evidence="1">Methylthioribose-1-phosphate isomerase</fullName>
        <shortName evidence="1">M1Pi</shortName>
        <shortName evidence="1">MTR-1-P isomerase</shortName>
        <ecNumber evidence="1">5.3.1.23</ecNumber>
    </recommendedName>
    <alternativeName>
        <fullName evidence="1">S-methyl-5-thioribose-1-phosphate isomerase</fullName>
    </alternativeName>
    <alternativeName>
        <fullName evidence="1">Translation initiation factor eIF-2B subunit alpha/beta/delta-like protein</fullName>
    </alternativeName>
</protein>
<comment type="function">
    <text evidence="1">Catalyzes the interconversion of methylthioribose-1-phosphate (MTR-1-P) into methylthioribulose-1-phosphate (MTRu-1-P).</text>
</comment>
<comment type="catalytic activity">
    <reaction evidence="1">
        <text>5-(methylsulfanyl)-alpha-D-ribose 1-phosphate = 5-(methylsulfanyl)-D-ribulose 1-phosphate</text>
        <dbReference type="Rhea" id="RHEA:19989"/>
        <dbReference type="ChEBI" id="CHEBI:58533"/>
        <dbReference type="ChEBI" id="CHEBI:58548"/>
        <dbReference type="EC" id="5.3.1.23"/>
    </reaction>
</comment>
<comment type="pathway">
    <text evidence="1">Amino-acid biosynthesis; L-methionine biosynthesis via salvage pathway; L-methionine from S-methyl-5-thio-alpha-D-ribose 1-phosphate: step 1/6.</text>
</comment>
<comment type="subcellular location">
    <subcellularLocation>
        <location evidence="1">Cytoplasm</location>
    </subcellularLocation>
    <subcellularLocation>
        <location evidence="1">Nucleus</location>
    </subcellularLocation>
</comment>
<comment type="similarity">
    <text evidence="1">Belongs to the eIF-2B alpha/beta/delta subunits family. MtnA subfamily.</text>
</comment>
<sequence>MTLAAITYTRGSLSILNQLLLPHQTTYDPLHSACDAWHAIHEMRVRGAPAIAIVAALSLAVELDALAANNQLSPEPKEVEVFIREKLEYLVSSRPTAVNLAEAAGRLGGIVSAKAEVRGVDGREVAEAYIAAAQRMLEDDVKDNRAIGEFGARWVLENGVATGSESGSEKGKVAVLTHCNTGSLATAGYGTALGVIRSLHATGSLERAYCTETRPYNQGSRLTAYELVHDKIPATLITDNMAAALLARNRAGSAASVGVSAIIVGADRVAANGDTANKIGTYGLAVLAKYHGVKFLVAAPRTTIDMNTKTGADIVIEERPKQEVTRVRGPRAGEEVDGLRAMETITVAANGIDVWNPAFDVTPAALIDGIITEVGVVEKDASGAFHLARIFE</sequence>
<keyword id="KW-0028">Amino-acid biosynthesis</keyword>
<keyword id="KW-0963">Cytoplasm</keyword>
<keyword id="KW-0413">Isomerase</keyword>
<keyword id="KW-0486">Methionine biosynthesis</keyword>
<keyword id="KW-0539">Nucleus</keyword>
<proteinExistence type="inferred from homology"/>
<dbReference type="EC" id="5.3.1.23" evidence="1"/>
<dbReference type="EMBL" id="EQ999975">
    <property type="protein sequence ID" value="EEQ88736.1"/>
    <property type="molecule type" value="Genomic_DNA"/>
</dbReference>
<dbReference type="SMR" id="C5GGE5"/>
<dbReference type="STRING" id="559297.C5GGE5"/>
<dbReference type="VEuPathDB" id="FungiDB:BDCG_03856"/>
<dbReference type="eggNOG" id="KOG1468">
    <property type="taxonomic scope" value="Eukaryota"/>
</dbReference>
<dbReference type="HOGENOM" id="CLU_016218_1_3_1"/>
<dbReference type="OMA" id="CETRPLN"/>
<dbReference type="UniPathway" id="UPA00904">
    <property type="reaction ID" value="UER00874"/>
</dbReference>
<dbReference type="GO" id="GO:0005737">
    <property type="term" value="C:cytoplasm"/>
    <property type="evidence" value="ECO:0007669"/>
    <property type="project" value="UniProtKB-SubCell"/>
</dbReference>
<dbReference type="GO" id="GO:0005634">
    <property type="term" value="C:nucleus"/>
    <property type="evidence" value="ECO:0007669"/>
    <property type="project" value="UniProtKB-SubCell"/>
</dbReference>
<dbReference type="GO" id="GO:0046523">
    <property type="term" value="F:S-methyl-5-thioribose-1-phosphate isomerase activity"/>
    <property type="evidence" value="ECO:0007669"/>
    <property type="project" value="UniProtKB-UniRule"/>
</dbReference>
<dbReference type="GO" id="GO:0019509">
    <property type="term" value="P:L-methionine salvage from methylthioadenosine"/>
    <property type="evidence" value="ECO:0007669"/>
    <property type="project" value="UniProtKB-UniRule"/>
</dbReference>
<dbReference type="FunFam" id="1.20.120.420:FF:000003">
    <property type="entry name" value="Methylthioribose-1-phosphate isomerase"/>
    <property type="match status" value="1"/>
</dbReference>
<dbReference type="FunFam" id="3.40.50.10470:FF:000003">
    <property type="entry name" value="Methylthioribose-1-phosphate isomerase"/>
    <property type="match status" value="1"/>
</dbReference>
<dbReference type="Gene3D" id="1.20.120.420">
    <property type="entry name" value="translation initiation factor eif-2b, domain 1"/>
    <property type="match status" value="1"/>
</dbReference>
<dbReference type="Gene3D" id="3.40.50.10470">
    <property type="entry name" value="Translation initiation factor eif-2b, domain 2"/>
    <property type="match status" value="1"/>
</dbReference>
<dbReference type="HAMAP" id="MF_01678">
    <property type="entry name" value="Salvage_MtnA"/>
    <property type="match status" value="1"/>
</dbReference>
<dbReference type="InterPro" id="IPR000649">
    <property type="entry name" value="IF-2B-related"/>
</dbReference>
<dbReference type="InterPro" id="IPR005251">
    <property type="entry name" value="IF-M1Pi"/>
</dbReference>
<dbReference type="InterPro" id="IPR042529">
    <property type="entry name" value="IF_2B-like_C"/>
</dbReference>
<dbReference type="InterPro" id="IPR011559">
    <property type="entry name" value="Initiation_fac_2B_a/b/d"/>
</dbReference>
<dbReference type="InterPro" id="IPR027363">
    <property type="entry name" value="M1Pi_N"/>
</dbReference>
<dbReference type="InterPro" id="IPR037171">
    <property type="entry name" value="NagB/RpiA_transferase-like"/>
</dbReference>
<dbReference type="NCBIfam" id="TIGR00524">
    <property type="entry name" value="eIF-2B_rel"/>
    <property type="match status" value="1"/>
</dbReference>
<dbReference type="NCBIfam" id="NF004326">
    <property type="entry name" value="PRK05720.1"/>
    <property type="match status" value="1"/>
</dbReference>
<dbReference type="NCBIfam" id="TIGR00512">
    <property type="entry name" value="salvage_mtnA"/>
    <property type="match status" value="1"/>
</dbReference>
<dbReference type="PANTHER" id="PTHR43475">
    <property type="entry name" value="METHYLTHIORIBOSE-1-PHOSPHATE ISOMERASE"/>
    <property type="match status" value="1"/>
</dbReference>
<dbReference type="PANTHER" id="PTHR43475:SF1">
    <property type="entry name" value="METHYLTHIORIBOSE-1-PHOSPHATE ISOMERASE"/>
    <property type="match status" value="1"/>
</dbReference>
<dbReference type="Pfam" id="PF01008">
    <property type="entry name" value="IF-2B"/>
    <property type="match status" value="1"/>
</dbReference>
<dbReference type="SUPFAM" id="SSF100950">
    <property type="entry name" value="NagB/RpiA/CoA transferase-like"/>
    <property type="match status" value="1"/>
</dbReference>
<organism>
    <name type="scientific">Ajellomyces dermatitidis (strain ER-3 / ATCC MYA-2586)</name>
    <name type="common">Blastomyces dermatitidis</name>
    <dbReference type="NCBI Taxonomy" id="559297"/>
    <lineage>
        <taxon>Eukaryota</taxon>
        <taxon>Fungi</taxon>
        <taxon>Dikarya</taxon>
        <taxon>Ascomycota</taxon>
        <taxon>Pezizomycotina</taxon>
        <taxon>Eurotiomycetes</taxon>
        <taxon>Eurotiomycetidae</taxon>
        <taxon>Onygenales</taxon>
        <taxon>Ajellomycetaceae</taxon>
        <taxon>Blastomyces</taxon>
    </lineage>
</organism>
<name>MTNA_AJEDR</name>
<evidence type="ECO:0000255" key="1">
    <source>
        <dbReference type="HAMAP-Rule" id="MF_03119"/>
    </source>
</evidence>
<gene>
    <name evidence="1" type="primary">MRI1</name>
    <name type="ORF">BDCG_03856</name>
</gene>
<accession>C5GGE5</accession>
<reference key="1">
    <citation type="journal article" date="2015" name="PLoS Genet.">
        <title>The dynamic genome and transcriptome of the human fungal pathogen Blastomyces and close relative Emmonsia.</title>
        <authorList>
            <person name="Munoz J.F."/>
            <person name="Gauthier G.M."/>
            <person name="Desjardins C.A."/>
            <person name="Gallo J.E."/>
            <person name="Holder J."/>
            <person name="Sullivan T.D."/>
            <person name="Marty A.J."/>
            <person name="Carmen J.C."/>
            <person name="Chen Z."/>
            <person name="Ding L."/>
            <person name="Gujja S."/>
            <person name="Magrini V."/>
            <person name="Misas E."/>
            <person name="Mitreva M."/>
            <person name="Priest M."/>
            <person name="Saif S."/>
            <person name="Whiston E.A."/>
            <person name="Young S."/>
            <person name="Zeng Q."/>
            <person name="Goldman W.E."/>
            <person name="Mardis E.R."/>
            <person name="Taylor J.W."/>
            <person name="McEwen J.G."/>
            <person name="Clay O.K."/>
            <person name="Klein B.S."/>
            <person name="Cuomo C.A."/>
        </authorList>
    </citation>
    <scope>NUCLEOTIDE SEQUENCE [LARGE SCALE GENOMIC DNA]</scope>
    <source>
        <strain>ER-3 / ATCC MYA-2586</strain>
    </source>
</reference>
<feature type="chain" id="PRO_0000402009" description="Methylthioribose-1-phosphate isomerase">
    <location>
        <begin position="1"/>
        <end position="392"/>
    </location>
</feature>
<feature type="active site" description="Proton donor" evidence="1">
    <location>
        <position position="267"/>
    </location>
</feature>
<feature type="site" description="Transition state stabilizer" evidence="1">
    <location>
        <position position="179"/>
    </location>
</feature>